<keyword id="KW-0249">Electron transport</keyword>
<keyword id="KW-0472">Membrane</keyword>
<keyword id="KW-0496">Mitochondrion</keyword>
<keyword id="KW-0520">NAD</keyword>
<keyword id="KW-0679">Respiratory chain</keyword>
<keyword id="KW-1278">Translocase</keyword>
<keyword id="KW-0812">Transmembrane</keyword>
<keyword id="KW-1133">Transmembrane helix</keyword>
<keyword id="KW-0813">Transport</keyword>
<keyword id="KW-0830">Ubiquinone</keyword>
<name>NU6M_MARPO</name>
<gene>
    <name type="primary">ND6</name>
    <name type="synonym">NAD6</name>
</gene>
<comment type="function">
    <text evidence="1">Core subunit of the mitochondrial membrane respiratory chain NADH dehydrogenase (Complex I) that is believed to belong to the minimal assembly required for catalysis. Complex I functions in the transfer of electrons from NADH to the respiratory chain. The immediate electron acceptor for the enzyme is believed to be ubiquinone (By similarity).</text>
</comment>
<comment type="catalytic activity">
    <reaction>
        <text>a ubiquinone + NADH + 5 H(+)(in) = a ubiquinol + NAD(+) + 4 H(+)(out)</text>
        <dbReference type="Rhea" id="RHEA:29091"/>
        <dbReference type="Rhea" id="RHEA-COMP:9565"/>
        <dbReference type="Rhea" id="RHEA-COMP:9566"/>
        <dbReference type="ChEBI" id="CHEBI:15378"/>
        <dbReference type="ChEBI" id="CHEBI:16389"/>
        <dbReference type="ChEBI" id="CHEBI:17976"/>
        <dbReference type="ChEBI" id="CHEBI:57540"/>
        <dbReference type="ChEBI" id="CHEBI:57945"/>
        <dbReference type="EC" id="7.1.1.2"/>
    </reaction>
</comment>
<comment type="subcellular location">
    <subcellularLocation>
        <location evidence="3">Mitochondrion membrane</location>
        <topology evidence="3">Multi-pass membrane protein</topology>
    </subcellularLocation>
</comment>
<comment type="similarity">
    <text evidence="3">Belongs to the complex I subunit 6 family.</text>
</comment>
<evidence type="ECO:0000250" key="1"/>
<evidence type="ECO:0000255" key="2"/>
<evidence type="ECO:0000305" key="3"/>
<dbReference type="EC" id="7.1.1.2"/>
<dbReference type="EMBL" id="S64009">
    <property type="protein sequence ID" value="AAD13944.1"/>
    <property type="molecule type" value="mRNA"/>
</dbReference>
<dbReference type="EMBL" id="M68929">
    <property type="protein sequence ID" value="AAC09405.1"/>
    <property type="molecule type" value="Genomic_DNA"/>
</dbReference>
<dbReference type="PIR" id="S25967">
    <property type="entry name" value="S25967"/>
</dbReference>
<dbReference type="RefSeq" id="NP_054408.1">
    <property type="nucleotide sequence ID" value="NC_001660.1"/>
</dbReference>
<dbReference type="SMR" id="P26850"/>
<dbReference type="GeneID" id="2702455"/>
<dbReference type="GO" id="GO:0031966">
    <property type="term" value="C:mitochondrial membrane"/>
    <property type="evidence" value="ECO:0007669"/>
    <property type="project" value="UniProtKB-SubCell"/>
</dbReference>
<dbReference type="GO" id="GO:0008137">
    <property type="term" value="F:NADH dehydrogenase (ubiquinone) activity"/>
    <property type="evidence" value="ECO:0007669"/>
    <property type="project" value="UniProtKB-EC"/>
</dbReference>
<dbReference type="FunFam" id="1.20.120.1200:FF:000003">
    <property type="entry name" value="NADH-ubiquinone oxidoreductase chain 6"/>
    <property type="match status" value="1"/>
</dbReference>
<dbReference type="Gene3D" id="1.20.120.1200">
    <property type="entry name" value="NADH-ubiquinone/plastoquinone oxidoreductase chain 6, subunit NuoJ"/>
    <property type="match status" value="1"/>
</dbReference>
<dbReference type="InterPro" id="IPR001457">
    <property type="entry name" value="NADH_UbQ/plastoQ_OxRdtase_su6"/>
</dbReference>
<dbReference type="InterPro" id="IPR042106">
    <property type="entry name" value="Nuo/plastoQ_OxRdtase_6_NuoJ"/>
</dbReference>
<dbReference type="NCBIfam" id="NF005164">
    <property type="entry name" value="PRK06638.1-4"/>
    <property type="match status" value="1"/>
</dbReference>
<dbReference type="PANTHER" id="PTHR33269">
    <property type="entry name" value="NADH-UBIQUINONE OXIDOREDUCTASE CHAIN 6"/>
    <property type="match status" value="1"/>
</dbReference>
<dbReference type="PANTHER" id="PTHR33269:SF17">
    <property type="entry name" value="NADH-UBIQUINONE OXIDOREDUCTASE CHAIN 6"/>
    <property type="match status" value="1"/>
</dbReference>
<dbReference type="Pfam" id="PF00499">
    <property type="entry name" value="Oxidored_q3"/>
    <property type="match status" value="1"/>
</dbReference>
<proteinExistence type="evidence at transcript level"/>
<accession>P26850</accession>
<sequence length="199" mass="22539">MILFYVFVVLALVSGAMVIRAKNPVHSVLFLILVFCNTSGLLVLLGLDFFAMIFLVVYVGAIAVLFLFVVMMLHIRIEEIHENVLRYLPVGGIIGLIFLLEIFLMVDNDYIPILPTKLSATYLTYTVYAGKIHSWTNLETLGNLLYTTYFFLFLVSSLILLVALIGAIVLTMHKTTKVKRQDVFIQNAIDFQNTIKKVR</sequence>
<reference key="1">
    <citation type="journal article" date="1992" name="J. Mol. Biol.">
        <title>Gene organization deduced from the complete sequence of liverwort Marchantia polymorpha mitochondrial DNA. A primitive form of plant mitochondrial genome.</title>
        <authorList>
            <person name="Oda K."/>
            <person name="Yamato K."/>
            <person name="Ohta E."/>
            <person name="Nakamura Y."/>
            <person name="Takemura M."/>
            <person name="Nozato N."/>
            <person name="Akashi K."/>
            <person name="Kanegae T."/>
            <person name="Ogura Y."/>
            <person name="Kohchi T."/>
            <person name="Ohyama K."/>
        </authorList>
    </citation>
    <scope>NUCLEOTIDE SEQUENCE [GENOMIC DNA]</scope>
</reference>
<reference key="2">
    <citation type="journal article" date="1993" name="Curr. Genet.">
        <title>Occurrence and transcription of genes for nad1, nad3, nad4L, and nad6, coding for NADH dehydrogenase subunits 1, 3, 4L, and 6, in liverwort mitochondria.</title>
        <authorList>
            <person name="Yamato K."/>
            <person name="Nozato N."/>
            <person name="Oda K."/>
            <person name="Ohta E."/>
            <person name="Takemura M."/>
            <person name="Akashi K."/>
            <person name="Ohyama K."/>
        </authorList>
    </citation>
    <scope>NUCLEOTIDE SEQUENCE [MRNA] OF 1-109</scope>
</reference>
<feature type="chain" id="PRO_0000118302" description="NADH-ubiquinone oxidoreductase chain 6">
    <location>
        <begin position="1"/>
        <end position="199"/>
    </location>
</feature>
<feature type="transmembrane region" description="Helical" evidence="2">
    <location>
        <begin position="1"/>
        <end position="21"/>
    </location>
</feature>
<feature type="transmembrane region" description="Helical" evidence="2">
    <location>
        <begin position="27"/>
        <end position="47"/>
    </location>
</feature>
<feature type="transmembrane region" description="Helical" evidence="2">
    <location>
        <begin position="49"/>
        <end position="69"/>
    </location>
</feature>
<feature type="transmembrane region" description="Helical" evidence="2">
    <location>
        <begin position="87"/>
        <end position="107"/>
    </location>
</feature>
<feature type="transmembrane region" description="Helical" evidence="2">
    <location>
        <begin position="150"/>
        <end position="170"/>
    </location>
</feature>
<protein>
    <recommendedName>
        <fullName>NADH-ubiquinone oxidoreductase chain 6</fullName>
        <ecNumber>7.1.1.2</ecNumber>
    </recommendedName>
    <alternativeName>
        <fullName>NADH dehydrogenase subunit 6</fullName>
    </alternativeName>
</protein>
<organism>
    <name type="scientific">Marchantia polymorpha</name>
    <name type="common">Common liverwort</name>
    <name type="synonym">Marchantia aquatica</name>
    <dbReference type="NCBI Taxonomy" id="3197"/>
    <lineage>
        <taxon>Eukaryota</taxon>
        <taxon>Viridiplantae</taxon>
        <taxon>Streptophyta</taxon>
        <taxon>Embryophyta</taxon>
        <taxon>Marchantiophyta</taxon>
        <taxon>Marchantiopsida</taxon>
        <taxon>Marchantiidae</taxon>
        <taxon>Marchantiales</taxon>
        <taxon>Marchantiaceae</taxon>
        <taxon>Marchantia</taxon>
    </lineage>
</organism>
<geneLocation type="mitochondrion"/>